<accession>B5YBN9</accession>
<sequence>MKRTYQPKKHHRKRVHGFLARMRTPGGRRVIKRRRAKGRKRLTV</sequence>
<organism>
    <name type="scientific">Dictyoglomus thermophilum (strain ATCC 35947 / DSM 3960 / H-6-12)</name>
    <dbReference type="NCBI Taxonomy" id="309799"/>
    <lineage>
        <taxon>Bacteria</taxon>
        <taxon>Pseudomonadati</taxon>
        <taxon>Dictyoglomota</taxon>
        <taxon>Dictyoglomia</taxon>
        <taxon>Dictyoglomales</taxon>
        <taxon>Dictyoglomaceae</taxon>
        <taxon>Dictyoglomus</taxon>
    </lineage>
</organism>
<name>RL34_DICT6</name>
<proteinExistence type="inferred from homology"/>
<comment type="similarity">
    <text evidence="1">Belongs to the bacterial ribosomal protein bL34 family.</text>
</comment>
<feature type="chain" id="PRO_1000196038" description="Large ribosomal subunit protein bL34">
    <location>
        <begin position="1"/>
        <end position="44"/>
    </location>
</feature>
<reference key="1">
    <citation type="journal article" date="2014" name="Genome Announc.">
        <title>Complete Genome Sequence of the Extreme Thermophile Dictyoglomus thermophilum H-6-12.</title>
        <authorList>
            <person name="Coil D.A."/>
            <person name="Badger J.H."/>
            <person name="Forberger H.C."/>
            <person name="Riggs F."/>
            <person name="Madupu R."/>
            <person name="Fedorova N."/>
            <person name="Ward N."/>
            <person name="Robb F.T."/>
            <person name="Eisen J.A."/>
        </authorList>
    </citation>
    <scope>NUCLEOTIDE SEQUENCE [LARGE SCALE GENOMIC DNA]</scope>
    <source>
        <strain>ATCC 35947 / DSM 3960 / H-6-12</strain>
    </source>
</reference>
<evidence type="ECO:0000255" key="1">
    <source>
        <dbReference type="HAMAP-Rule" id="MF_00391"/>
    </source>
</evidence>
<evidence type="ECO:0000305" key="2"/>
<gene>
    <name evidence="1" type="primary">rpmH</name>
    <name type="ordered locus">DICTH_1849</name>
</gene>
<protein>
    <recommendedName>
        <fullName evidence="1">Large ribosomal subunit protein bL34</fullName>
    </recommendedName>
    <alternativeName>
        <fullName evidence="2">50S ribosomal protein L34</fullName>
    </alternativeName>
</protein>
<keyword id="KW-0687">Ribonucleoprotein</keyword>
<keyword id="KW-0689">Ribosomal protein</keyword>
<dbReference type="EMBL" id="CP001146">
    <property type="protein sequence ID" value="ACI18472.1"/>
    <property type="molecule type" value="Genomic_DNA"/>
</dbReference>
<dbReference type="RefSeq" id="WP_012547104.1">
    <property type="nucleotide sequence ID" value="NC_011297.1"/>
</dbReference>
<dbReference type="SMR" id="B5YBN9"/>
<dbReference type="STRING" id="309799.DICTH_1849"/>
<dbReference type="PaxDb" id="309799-DICTH_1849"/>
<dbReference type="KEGG" id="dth:DICTH_1849"/>
<dbReference type="eggNOG" id="COG0230">
    <property type="taxonomic scope" value="Bacteria"/>
</dbReference>
<dbReference type="HOGENOM" id="CLU_129938_2_0_0"/>
<dbReference type="Proteomes" id="UP000001733">
    <property type="component" value="Chromosome"/>
</dbReference>
<dbReference type="GO" id="GO:1990904">
    <property type="term" value="C:ribonucleoprotein complex"/>
    <property type="evidence" value="ECO:0007669"/>
    <property type="project" value="UniProtKB-KW"/>
</dbReference>
<dbReference type="GO" id="GO:0005840">
    <property type="term" value="C:ribosome"/>
    <property type="evidence" value="ECO:0007669"/>
    <property type="project" value="UniProtKB-KW"/>
</dbReference>
<dbReference type="GO" id="GO:0003735">
    <property type="term" value="F:structural constituent of ribosome"/>
    <property type="evidence" value="ECO:0007669"/>
    <property type="project" value="InterPro"/>
</dbReference>
<dbReference type="GO" id="GO:0006412">
    <property type="term" value="P:translation"/>
    <property type="evidence" value="ECO:0007669"/>
    <property type="project" value="UniProtKB-UniRule"/>
</dbReference>
<dbReference type="FunFam" id="1.10.287.3980:FF:000001">
    <property type="entry name" value="Mitochondrial ribosomal protein L34"/>
    <property type="match status" value="1"/>
</dbReference>
<dbReference type="Gene3D" id="1.10.287.3980">
    <property type="match status" value="1"/>
</dbReference>
<dbReference type="HAMAP" id="MF_00391">
    <property type="entry name" value="Ribosomal_bL34"/>
    <property type="match status" value="1"/>
</dbReference>
<dbReference type="InterPro" id="IPR000271">
    <property type="entry name" value="Ribosomal_bL34"/>
</dbReference>
<dbReference type="InterPro" id="IPR020939">
    <property type="entry name" value="Ribosomal_bL34_CS"/>
</dbReference>
<dbReference type="NCBIfam" id="TIGR01030">
    <property type="entry name" value="rpmH_bact"/>
    <property type="match status" value="1"/>
</dbReference>
<dbReference type="PANTHER" id="PTHR14503:SF4">
    <property type="entry name" value="LARGE RIBOSOMAL SUBUNIT PROTEIN BL34M"/>
    <property type="match status" value="1"/>
</dbReference>
<dbReference type="PANTHER" id="PTHR14503">
    <property type="entry name" value="MITOCHONDRIAL RIBOSOMAL PROTEIN 34 FAMILY MEMBER"/>
    <property type="match status" value="1"/>
</dbReference>
<dbReference type="Pfam" id="PF00468">
    <property type="entry name" value="Ribosomal_L34"/>
    <property type="match status" value="1"/>
</dbReference>
<dbReference type="PROSITE" id="PS00784">
    <property type="entry name" value="RIBOSOMAL_L34"/>
    <property type="match status" value="1"/>
</dbReference>